<name>M7H1_BOMMX</name>
<organism>
    <name type="scientific">Bombina maxima</name>
    <name type="common">Giant fire-bellied toad</name>
    <name type="synonym">Chinese red belly toad</name>
    <dbReference type="NCBI Taxonomy" id="161274"/>
    <lineage>
        <taxon>Eukaryota</taxon>
        <taxon>Metazoa</taxon>
        <taxon>Chordata</taxon>
        <taxon>Craniata</taxon>
        <taxon>Vertebrata</taxon>
        <taxon>Euteleostomi</taxon>
        <taxon>Amphibia</taxon>
        <taxon>Batrachia</taxon>
        <taxon>Anura</taxon>
        <taxon>Bombinatoridae</taxon>
        <taxon>Bombina</taxon>
    </lineage>
</organism>
<evidence type="ECO:0000250" key="1"/>
<evidence type="ECO:0000255" key="2"/>
<evidence type="ECO:0000269" key="3">
    <source>
    </source>
</evidence>
<evidence type="ECO:0000269" key="4">
    <source>
    </source>
</evidence>
<evidence type="ECO:0000269" key="5">
    <source ref="2"/>
</evidence>
<evidence type="ECO:0000305" key="6"/>
<feature type="signal peptide" evidence="2">
    <location>
        <begin position="1"/>
        <end position="18"/>
    </location>
</feature>
<feature type="propeptide" id="PRO_0000003200" evidence="1">
    <location>
        <begin position="19"/>
        <end position="43"/>
    </location>
</feature>
<feature type="peptide" id="PRO_0000003201" description="Maximin-7">
    <location>
        <begin position="44"/>
        <end position="70"/>
    </location>
</feature>
<feature type="propeptide" id="PRO_0000003202" evidence="3 5">
    <location>
        <begin position="74"/>
        <end position="123"/>
    </location>
</feature>
<feature type="peptide" id="PRO_0000003203" description="Maximin-H1">
    <location>
        <begin position="124"/>
        <end position="143"/>
    </location>
</feature>
<feature type="modified residue" description="Asparagine amide" evidence="4">
    <location>
        <position position="70"/>
    </location>
</feature>
<feature type="modified residue" description="Leucine amide" evidence="3 4">
    <location>
        <position position="143"/>
    </location>
</feature>
<comment type="function">
    <text evidence="1">Maximin-7 shows antimicrobial activity against bacteria and against the fungus C.albicans. It has little hemolytic activity (By similarity).</text>
</comment>
<comment type="function">
    <text evidence="3 5">Maximin-H1 shows antibacterial activity against both Gram-positive and Gram-negative bacteria. It also shows antimicrobial activity against the fungus C.albicans. Shows strong hemolytic activity.</text>
</comment>
<comment type="subcellular location">
    <subcellularLocation>
        <location evidence="5">Secreted</location>
    </subcellularLocation>
</comment>
<comment type="tissue specificity">
    <text evidence="5">Expressed by the skin glands.</text>
</comment>
<comment type="mass spectrometry">
    <molecule>Maximin-H1</molecule>
</comment>
<comment type="similarity">
    <text evidence="6">Belongs to the bombinin family.</text>
</comment>
<dbReference type="EMBL" id="AY848986">
    <property type="protein sequence ID" value="AAX50207.1"/>
    <property type="molecule type" value="mRNA"/>
</dbReference>
<dbReference type="SMR" id="Q58T74"/>
<dbReference type="GO" id="GO:0005576">
    <property type="term" value="C:extracellular region"/>
    <property type="evidence" value="ECO:0007669"/>
    <property type="project" value="UniProtKB-SubCell"/>
</dbReference>
<dbReference type="GO" id="GO:0042742">
    <property type="term" value="P:defense response to bacterium"/>
    <property type="evidence" value="ECO:0007669"/>
    <property type="project" value="UniProtKB-KW"/>
</dbReference>
<dbReference type="GO" id="GO:0050832">
    <property type="term" value="P:defense response to fungus"/>
    <property type="evidence" value="ECO:0007669"/>
    <property type="project" value="UniProtKB-KW"/>
</dbReference>
<dbReference type="GO" id="GO:0031640">
    <property type="term" value="P:killing of cells of another organism"/>
    <property type="evidence" value="ECO:0007669"/>
    <property type="project" value="UniProtKB-KW"/>
</dbReference>
<dbReference type="InterPro" id="IPR007962">
    <property type="entry name" value="Bombinin"/>
</dbReference>
<dbReference type="Pfam" id="PF05298">
    <property type="entry name" value="Bombinin"/>
    <property type="match status" value="1"/>
</dbReference>
<reference key="1">
    <citation type="journal article" date="2005" name="Eur. J. Immunol.">
        <title>Variety of antimicrobial peptides in the Bombina maxima toad and evidence of their rapid diversification.</title>
        <authorList>
            <person name="Lee W.-H."/>
            <person name="Li Y."/>
            <person name="Lai R."/>
            <person name="Li S."/>
            <person name="Zhang Y."/>
            <person name="Wang W."/>
        </authorList>
    </citation>
    <scope>NUCLEOTIDE SEQUENCE [MRNA]</scope>
    <scope>PROTEIN SEQUENCE OF 44-70 AND 124-143</scope>
    <scope>AMIDATION AT ASN-70 AND LEU-143</scope>
    <scope>MASS SPECTROMETRY</scope>
    <source>
        <tissue>Skin</tissue>
    </source>
</reference>
<reference key="2">
    <citation type="submission" date="2001-07" db="UniProtKB">
        <title>Isolation and structural characterisation of antimicrobial peptides from the venom of the Chinese large-webbed bell toad (Bombina maxima).</title>
        <authorList>
            <person name="Chen T.B."/>
            <person name="McClean S."/>
            <person name="Orr D.F."/>
            <person name="Bjourson A.J."/>
            <person name="Rao P.F."/>
            <person name="Shaw C."/>
        </authorList>
    </citation>
    <scope>PROTEIN SEQUENCE OF 124-143</scope>
    <scope>FUNCTION OF MAXIMIN-H1</scope>
    <scope>SUBCELLULAR LOCATION</scope>
    <scope>TISSUE SPECIFICITY</scope>
    <source>
        <tissue>Skin secretion</tissue>
    </source>
</reference>
<reference key="3">
    <citation type="journal article" date="2002" name="Peptides">
        <title>Antimicrobial peptides from skin secretions of Chinese red belly toad Bombina maxima.</title>
        <authorList>
            <person name="Lai R."/>
            <person name="Zheng Y.-T."/>
            <person name="Shen J.-H."/>
            <person name="Liu G.-J."/>
            <person name="Liu H."/>
            <person name="Lee W.-H."/>
            <person name="Tang S.-Z."/>
            <person name="Zhang Y."/>
        </authorList>
    </citation>
    <scope>PROTEIN SEQUENCE OF 124-143</scope>
    <scope>AMIDATION AT LEU-143</scope>
    <scope>FUNCTION OF MAXIMIN-H1</scope>
    <scope>MASS SPECTROMETRY</scope>
</reference>
<proteinExistence type="evidence at protein level"/>
<sequence>MNFKYIVAVSFLIASAYARSEENDEQSLSQRDVLEEESLREIRGIGAKILGGVKTALKGALKELASTYVNGKRTAEDHEVMKRLEAVMRDLDSLDYPEEAAERETRGFNQEEIANLFTKKEKRILGPVISTIGGVLGGLLKNLG</sequence>
<keyword id="KW-0027">Amidation</keyword>
<keyword id="KW-0878">Amphibian defense peptide</keyword>
<keyword id="KW-0044">Antibiotic</keyword>
<keyword id="KW-0929">Antimicrobial</keyword>
<keyword id="KW-0165">Cleavage on pair of basic residues</keyword>
<keyword id="KW-0204">Cytolysis</keyword>
<keyword id="KW-0903">Direct protein sequencing</keyword>
<keyword id="KW-0295">Fungicide</keyword>
<keyword id="KW-0354">Hemolysis</keyword>
<keyword id="KW-0964">Secreted</keyword>
<keyword id="KW-0732">Signal</keyword>
<protein>
    <recommendedName>
        <fullName>Maximins 7/H1</fullName>
    </recommendedName>
    <component>
        <recommendedName>
            <fullName>Maximin-7</fullName>
        </recommendedName>
    </component>
    <component>
        <recommendedName>
            <fullName>Maximin-H1</fullName>
        </recommendedName>
        <alternativeName>
            <fullName>Maximin-6</fullName>
        </alternativeName>
    </component>
</protein>
<accession>Q58T74</accession>
<accession>P83085</accession>